<evidence type="ECO:0000255" key="1">
    <source>
        <dbReference type="HAMAP-Rule" id="MF_01569"/>
    </source>
</evidence>
<accession>Q1H497</accession>
<protein>
    <recommendedName>
        <fullName evidence="1">Proline--tRNA ligase</fullName>
        <ecNumber evidence="1">6.1.1.15</ecNumber>
    </recommendedName>
    <alternativeName>
        <fullName evidence="1">Prolyl-tRNA synthetase</fullName>
        <shortName evidence="1">ProRS</shortName>
    </alternativeName>
</protein>
<organism>
    <name type="scientific">Methylobacillus flagellatus (strain ATCC 51484 / DSM 6875 / VKM B-1610 / KT)</name>
    <dbReference type="NCBI Taxonomy" id="265072"/>
    <lineage>
        <taxon>Bacteria</taxon>
        <taxon>Pseudomonadati</taxon>
        <taxon>Pseudomonadota</taxon>
        <taxon>Betaproteobacteria</taxon>
        <taxon>Nitrosomonadales</taxon>
        <taxon>Methylophilaceae</taxon>
        <taxon>Methylobacillus</taxon>
    </lineage>
</organism>
<proteinExistence type="inferred from homology"/>
<reference key="1">
    <citation type="submission" date="2006-03" db="EMBL/GenBank/DDBJ databases">
        <title>Complete sequence of Methylobacillus flagellatus KT.</title>
        <authorList>
            <consortium name="US DOE Joint Genome Institute"/>
            <person name="Copeland A."/>
            <person name="Lucas S."/>
            <person name="Lapidus A."/>
            <person name="Barry K."/>
            <person name="Detter J.C."/>
            <person name="Glavina del Rio T."/>
            <person name="Hammon N."/>
            <person name="Israni S."/>
            <person name="Dalin E."/>
            <person name="Tice H."/>
            <person name="Pitluck S."/>
            <person name="Brettin T."/>
            <person name="Bruce D."/>
            <person name="Han C."/>
            <person name="Tapia R."/>
            <person name="Saunders E."/>
            <person name="Gilna P."/>
            <person name="Schmutz J."/>
            <person name="Larimer F."/>
            <person name="Land M."/>
            <person name="Kyrpides N."/>
            <person name="Anderson I."/>
            <person name="Richardson P."/>
        </authorList>
    </citation>
    <scope>NUCLEOTIDE SEQUENCE [LARGE SCALE GENOMIC DNA]</scope>
    <source>
        <strain>ATCC 51484 / DSM 6875 / VKM B-1610 / KT</strain>
    </source>
</reference>
<feature type="chain" id="PRO_0000288348" description="Proline--tRNA ligase">
    <location>
        <begin position="1"/>
        <end position="573"/>
    </location>
</feature>
<name>SYP_METFK</name>
<comment type="function">
    <text evidence="1">Catalyzes the attachment of proline to tRNA(Pro) in a two-step reaction: proline is first activated by ATP to form Pro-AMP and then transferred to the acceptor end of tRNA(Pro). As ProRS can inadvertently accommodate and process non-cognate amino acids such as alanine and cysteine, to avoid such errors it has two additional distinct editing activities against alanine. One activity is designated as 'pretransfer' editing and involves the tRNA(Pro)-independent hydrolysis of activated Ala-AMP. The other activity is designated 'posttransfer' editing and involves deacylation of mischarged Ala-tRNA(Pro). The misacylated Cys-tRNA(Pro) is not edited by ProRS.</text>
</comment>
<comment type="catalytic activity">
    <reaction evidence="1">
        <text>tRNA(Pro) + L-proline + ATP = L-prolyl-tRNA(Pro) + AMP + diphosphate</text>
        <dbReference type="Rhea" id="RHEA:14305"/>
        <dbReference type="Rhea" id="RHEA-COMP:9700"/>
        <dbReference type="Rhea" id="RHEA-COMP:9702"/>
        <dbReference type="ChEBI" id="CHEBI:30616"/>
        <dbReference type="ChEBI" id="CHEBI:33019"/>
        <dbReference type="ChEBI" id="CHEBI:60039"/>
        <dbReference type="ChEBI" id="CHEBI:78442"/>
        <dbReference type="ChEBI" id="CHEBI:78532"/>
        <dbReference type="ChEBI" id="CHEBI:456215"/>
        <dbReference type="EC" id="6.1.1.15"/>
    </reaction>
</comment>
<comment type="subunit">
    <text evidence="1">Homodimer.</text>
</comment>
<comment type="subcellular location">
    <subcellularLocation>
        <location evidence="1">Cytoplasm</location>
    </subcellularLocation>
</comment>
<comment type="domain">
    <text evidence="1">Consists of three domains: the N-terminal catalytic domain, the editing domain and the C-terminal anticodon-binding domain.</text>
</comment>
<comment type="similarity">
    <text evidence="1">Belongs to the class-II aminoacyl-tRNA synthetase family. ProS type 1 subfamily.</text>
</comment>
<sequence length="573" mass="63221">MRASQFFLATQKEAPQEAELASHKLMLRAGLIKRLGSGLYSWMPLGLRVLRKVETIVREEMNRAGALELLMPAVQPKELWEETGRWAVFGPQMLKIRDRHERDFCFGPTHEEVITDIARREIRSYKQLPLNFYQIQTKFRDEIRPRFGVMRAREFVMKDGYSFHTSLESLQQTYDTMYQAYSNIFNRLGLKFRAVRADTGAIGGDGSHEFHVLADSGEDALAYCEHSDFAANVELAEALAPEHPRGEPKEPLREVDTPKQTTCEDVAALLGISLQQTVKSIAVVATDEAGNSQFYLLLLRGDHALNEVKAAKVPGLSSFRFASELEIREYLGCPPGFIGPVGVSTQVNVVADRSVAVMSDFVCGANKPKLHLAGVNFGRDLPEPMIVADIRNVVEGDPSPDGKGCISLCRGIEVGHIFQLRTKYTEAMEATYLDENGQKQFMEMGCYGIGVSRIVGAAIEQGNDERGIIFPAAMAPFSVAIAPIGYDKSEAVQSAAHALYDELSALGIDVLLDDRGERPGVMFADLELIGIPHRIVIGDRGLKEGQVEYQARTAASAETVALADIVSIVRQAL</sequence>
<gene>
    <name evidence="1" type="primary">proS</name>
    <name type="ordered locus">Mfla_0420</name>
</gene>
<dbReference type="EC" id="6.1.1.15" evidence="1"/>
<dbReference type="EMBL" id="CP000284">
    <property type="protein sequence ID" value="ABE48690.1"/>
    <property type="molecule type" value="Genomic_DNA"/>
</dbReference>
<dbReference type="RefSeq" id="WP_011478787.1">
    <property type="nucleotide sequence ID" value="NC_007947.1"/>
</dbReference>
<dbReference type="SMR" id="Q1H497"/>
<dbReference type="STRING" id="265072.Mfla_0420"/>
<dbReference type="KEGG" id="mfa:Mfla_0420"/>
<dbReference type="eggNOG" id="COG0442">
    <property type="taxonomic scope" value="Bacteria"/>
</dbReference>
<dbReference type="HOGENOM" id="CLU_016739_0_0_4"/>
<dbReference type="OrthoDB" id="9809052at2"/>
<dbReference type="Proteomes" id="UP000002440">
    <property type="component" value="Chromosome"/>
</dbReference>
<dbReference type="GO" id="GO:0005829">
    <property type="term" value="C:cytosol"/>
    <property type="evidence" value="ECO:0007669"/>
    <property type="project" value="TreeGrafter"/>
</dbReference>
<dbReference type="GO" id="GO:0002161">
    <property type="term" value="F:aminoacyl-tRNA deacylase activity"/>
    <property type="evidence" value="ECO:0007669"/>
    <property type="project" value="InterPro"/>
</dbReference>
<dbReference type="GO" id="GO:0005524">
    <property type="term" value="F:ATP binding"/>
    <property type="evidence" value="ECO:0007669"/>
    <property type="project" value="UniProtKB-UniRule"/>
</dbReference>
<dbReference type="GO" id="GO:0004827">
    <property type="term" value="F:proline-tRNA ligase activity"/>
    <property type="evidence" value="ECO:0007669"/>
    <property type="project" value="UniProtKB-UniRule"/>
</dbReference>
<dbReference type="GO" id="GO:0006433">
    <property type="term" value="P:prolyl-tRNA aminoacylation"/>
    <property type="evidence" value="ECO:0007669"/>
    <property type="project" value="UniProtKB-UniRule"/>
</dbReference>
<dbReference type="CDD" id="cd04334">
    <property type="entry name" value="ProRS-INS"/>
    <property type="match status" value="1"/>
</dbReference>
<dbReference type="CDD" id="cd00861">
    <property type="entry name" value="ProRS_anticodon_short"/>
    <property type="match status" value="1"/>
</dbReference>
<dbReference type="CDD" id="cd00779">
    <property type="entry name" value="ProRS_core_prok"/>
    <property type="match status" value="1"/>
</dbReference>
<dbReference type="FunFam" id="3.30.930.10:FF:000015">
    <property type="entry name" value="Proline--tRNA ligase"/>
    <property type="match status" value="1"/>
</dbReference>
<dbReference type="FunFam" id="3.30.930.10:FF:000043">
    <property type="entry name" value="Proline--tRNA ligase"/>
    <property type="match status" value="1"/>
</dbReference>
<dbReference type="Gene3D" id="3.40.50.800">
    <property type="entry name" value="Anticodon-binding domain"/>
    <property type="match status" value="1"/>
</dbReference>
<dbReference type="Gene3D" id="3.30.930.10">
    <property type="entry name" value="Bira Bifunctional Protein, Domain 2"/>
    <property type="match status" value="2"/>
</dbReference>
<dbReference type="Gene3D" id="3.90.960.10">
    <property type="entry name" value="YbaK/aminoacyl-tRNA synthetase-associated domain"/>
    <property type="match status" value="1"/>
</dbReference>
<dbReference type="HAMAP" id="MF_01569">
    <property type="entry name" value="Pro_tRNA_synth_type1"/>
    <property type="match status" value="1"/>
</dbReference>
<dbReference type="InterPro" id="IPR002314">
    <property type="entry name" value="aa-tRNA-synt_IIb"/>
</dbReference>
<dbReference type="InterPro" id="IPR006195">
    <property type="entry name" value="aa-tRNA-synth_II"/>
</dbReference>
<dbReference type="InterPro" id="IPR045864">
    <property type="entry name" value="aa-tRNA-synth_II/BPL/LPL"/>
</dbReference>
<dbReference type="InterPro" id="IPR004154">
    <property type="entry name" value="Anticodon-bd"/>
</dbReference>
<dbReference type="InterPro" id="IPR036621">
    <property type="entry name" value="Anticodon-bd_dom_sf"/>
</dbReference>
<dbReference type="InterPro" id="IPR002316">
    <property type="entry name" value="Pro-tRNA-ligase_IIa"/>
</dbReference>
<dbReference type="InterPro" id="IPR004500">
    <property type="entry name" value="Pro-tRNA-synth_IIa_bac-type"/>
</dbReference>
<dbReference type="InterPro" id="IPR023717">
    <property type="entry name" value="Pro-tRNA-Synthase_IIa_type1"/>
</dbReference>
<dbReference type="InterPro" id="IPR050062">
    <property type="entry name" value="Pro-tRNA_synthetase"/>
</dbReference>
<dbReference type="InterPro" id="IPR044140">
    <property type="entry name" value="ProRS_anticodon_short"/>
</dbReference>
<dbReference type="InterPro" id="IPR033730">
    <property type="entry name" value="ProRS_core_prok"/>
</dbReference>
<dbReference type="InterPro" id="IPR036754">
    <property type="entry name" value="YbaK/aa-tRNA-synt-asso_dom_sf"/>
</dbReference>
<dbReference type="InterPro" id="IPR007214">
    <property type="entry name" value="YbaK/aa-tRNA-synth-assoc-dom"/>
</dbReference>
<dbReference type="NCBIfam" id="NF006625">
    <property type="entry name" value="PRK09194.1"/>
    <property type="match status" value="1"/>
</dbReference>
<dbReference type="NCBIfam" id="TIGR00409">
    <property type="entry name" value="proS_fam_II"/>
    <property type="match status" value="1"/>
</dbReference>
<dbReference type="PANTHER" id="PTHR42753">
    <property type="entry name" value="MITOCHONDRIAL RIBOSOME PROTEIN L39/PROLYL-TRNA LIGASE FAMILY MEMBER"/>
    <property type="match status" value="1"/>
</dbReference>
<dbReference type="PANTHER" id="PTHR42753:SF2">
    <property type="entry name" value="PROLINE--TRNA LIGASE"/>
    <property type="match status" value="1"/>
</dbReference>
<dbReference type="Pfam" id="PF03129">
    <property type="entry name" value="HGTP_anticodon"/>
    <property type="match status" value="1"/>
</dbReference>
<dbReference type="Pfam" id="PF00587">
    <property type="entry name" value="tRNA-synt_2b"/>
    <property type="match status" value="1"/>
</dbReference>
<dbReference type="Pfam" id="PF04073">
    <property type="entry name" value="tRNA_edit"/>
    <property type="match status" value="1"/>
</dbReference>
<dbReference type="PIRSF" id="PIRSF001535">
    <property type="entry name" value="ProRS_1"/>
    <property type="match status" value="1"/>
</dbReference>
<dbReference type="PRINTS" id="PR01046">
    <property type="entry name" value="TRNASYNTHPRO"/>
</dbReference>
<dbReference type="SUPFAM" id="SSF52954">
    <property type="entry name" value="Class II aaRS ABD-related"/>
    <property type="match status" value="1"/>
</dbReference>
<dbReference type="SUPFAM" id="SSF55681">
    <property type="entry name" value="Class II aaRS and biotin synthetases"/>
    <property type="match status" value="1"/>
</dbReference>
<dbReference type="SUPFAM" id="SSF55826">
    <property type="entry name" value="YbaK/ProRS associated domain"/>
    <property type="match status" value="1"/>
</dbReference>
<dbReference type="PROSITE" id="PS50862">
    <property type="entry name" value="AA_TRNA_LIGASE_II"/>
    <property type="match status" value="1"/>
</dbReference>
<keyword id="KW-0030">Aminoacyl-tRNA synthetase</keyword>
<keyword id="KW-0067">ATP-binding</keyword>
<keyword id="KW-0963">Cytoplasm</keyword>
<keyword id="KW-0436">Ligase</keyword>
<keyword id="KW-0547">Nucleotide-binding</keyword>
<keyword id="KW-0648">Protein biosynthesis</keyword>
<keyword id="KW-1185">Reference proteome</keyword>